<keyword id="KW-0002">3D-structure</keyword>
<keyword id="KW-0378">Hydrolase</keyword>
<keyword id="KW-1185">Reference proteome</keyword>
<comment type="catalytic activity">
    <reaction>
        <text>an acyl phosphate + H2O = a carboxylate + phosphate + H(+)</text>
        <dbReference type="Rhea" id="RHEA:14965"/>
        <dbReference type="ChEBI" id="CHEBI:15377"/>
        <dbReference type="ChEBI" id="CHEBI:15378"/>
        <dbReference type="ChEBI" id="CHEBI:29067"/>
        <dbReference type="ChEBI" id="CHEBI:43474"/>
        <dbReference type="ChEBI" id="CHEBI:59918"/>
        <dbReference type="EC" id="3.6.1.7"/>
    </reaction>
</comment>
<comment type="similarity">
    <text evidence="2">Belongs to the acylphosphatase family.</text>
</comment>
<organism>
    <name type="scientific">Deinococcus radiodurans (strain ATCC 13939 / DSM 20539 / JCM 16871 / CCUG 27074 / LMG 4051 / NBRC 15346 / NCIMB 9279 / VKM B-1422 / R1)</name>
    <dbReference type="NCBI Taxonomy" id="243230"/>
    <lineage>
        <taxon>Bacteria</taxon>
        <taxon>Thermotogati</taxon>
        <taxon>Deinococcota</taxon>
        <taxon>Deinococci</taxon>
        <taxon>Deinococcales</taxon>
        <taxon>Deinococcaceae</taxon>
        <taxon>Deinococcus</taxon>
    </lineage>
</organism>
<gene>
    <name type="primary">acyP</name>
    <name type="ordered locus">DR_0929</name>
</gene>
<name>ACYP_DEIRA</name>
<dbReference type="EC" id="3.6.1.7"/>
<dbReference type="EMBL" id="AE000513">
    <property type="protein sequence ID" value="AAF10506.1"/>
    <property type="molecule type" value="Genomic_DNA"/>
</dbReference>
<dbReference type="PIR" id="D75459">
    <property type="entry name" value="D75459"/>
</dbReference>
<dbReference type="RefSeq" id="NP_294653.1">
    <property type="nucleotide sequence ID" value="NC_001263.1"/>
</dbReference>
<dbReference type="RefSeq" id="WP_010887574.1">
    <property type="nucleotide sequence ID" value="NC_001263.1"/>
</dbReference>
<dbReference type="PDB" id="8JFS">
    <property type="method" value="X-ray"/>
    <property type="resolution" value="1.00 A"/>
    <property type="chains" value="A/B=1-87"/>
</dbReference>
<dbReference type="PDBsum" id="8JFS"/>
<dbReference type="SMR" id="Q9RVU3"/>
<dbReference type="FunCoup" id="Q9RVU3">
    <property type="interactions" value="195"/>
</dbReference>
<dbReference type="STRING" id="243230.DR_0929"/>
<dbReference type="PaxDb" id="243230-DR_0929"/>
<dbReference type="EnsemblBacteria" id="AAF10506">
    <property type="protein sequence ID" value="AAF10506"/>
    <property type="gene ID" value="DR_0929"/>
</dbReference>
<dbReference type="GeneID" id="69517174"/>
<dbReference type="KEGG" id="dra:DR_0929"/>
<dbReference type="PATRIC" id="fig|243230.17.peg.1116"/>
<dbReference type="eggNOG" id="COG1254">
    <property type="taxonomic scope" value="Bacteria"/>
</dbReference>
<dbReference type="HOGENOM" id="CLU_141932_3_2_0"/>
<dbReference type="InParanoid" id="Q9RVU3"/>
<dbReference type="OrthoDB" id="9808093at2"/>
<dbReference type="Proteomes" id="UP000002524">
    <property type="component" value="Chromosome 1"/>
</dbReference>
<dbReference type="GO" id="GO:0003998">
    <property type="term" value="F:acylphosphatase activity"/>
    <property type="evidence" value="ECO:0007669"/>
    <property type="project" value="UniProtKB-EC"/>
</dbReference>
<dbReference type="Gene3D" id="3.30.70.100">
    <property type="match status" value="1"/>
</dbReference>
<dbReference type="InterPro" id="IPR020456">
    <property type="entry name" value="Acylphosphatase"/>
</dbReference>
<dbReference type="InterPro" id="IPR001792">
    <property type="entry name" value="Acylphosphatase-like_dom"/>
</dbReference>
<dbReference type="InterPro" id="IPR036046">
    <property type="entry name" value="Acylphosphatase-like_dom_sf"/>
</dbReference>
<dbReference type="NCBIfam" id="NF011007">
    <property type="entry name" value="PRK14433.1"/>
    <property type="match status" value="1"/>
</dbReference>
<dbReference type="PANTHER" id="PTHR47268">
    <property type="entry name" value="ACYLPHOSPHATASE"/>
    <property type="match status" value="1"/>
</dbReference>
<dbReference type="PANTHER" id="PTHR47268:SF4">
    <property type="entry name" value="ACYLPHOSPHATASE"/>
    <property type="match status" value="1"/>
</dbReference>
<dbReference type="Pfam" id="PF00708">
    <property type="entry name" value="Acylphosphatase"/>
    <property type="match status" value="1"/>
</dbReference>
<dbReference type="SUPFAM" id="SSF54975">
    <property type="entry name" value="Acylphosphatase/BLUF domain-like"/>
    <property type="match status" value="1"/>
</dbReference>
<dbReference type="PROSITE" id="PS51160">
    <property type="entry name" value="ACYLPHOSPHATASE_3"/>
    <property type="match status" value="1"/>
</dbReference>
<accession>Q9RVU3</accession>
<reference key="1">
    <citation type="journal article" date="1999" name="Science">
        <title>Genome sequence of the radioresistant bacterium Deinococcus radiodurans R1.</title>
        <authorList>
            <person name="White O."/>
            <person name="Eisen J.A."/>
            <person name="Heidelberg J.F."/>
            <person name="Hickey E.K."/>
            <person name="Peterson J.D."/>
            <person name="Dodson R.J."/>
            <person name="Haft D.H."/>
            <person name="Gwinn M.L."/>
            <person name="Nelson W.C."/>
            <person name="Richardson D.L."/>
            <person name="Moffat K.S."/>
            <person name="Qin H."/>
            <person name="Jiang L."/>
            <person name="Pamphile W."/>
            <person name="Crosby M."/>
            <person name="Shen M."/>
            <person name="Vamathevan J.J."/>
            <person name="Lam P."/>
            <person name="McDonald L.A."/>
            <person name="Utterback T.R."/>
            <person name="Zalewski C."/>
            <person name="Makarova K.S."/>
            <person name="Aravind L."/>
            <person name="Daly M.J."/>
            <person name="Minton K.W."/>
            <person name="Fleischmann R.D."/>
            <person name="Ketchum K.A."/>
            <person name="Nelson K.E."/>
            <person name="Salzberg S.L."/>
            <person name="Smith H.O."/>
            <person name="Venter J.C."/>
            <person name="Fraser C.M."/>
        </authorList>
    </citation>
    <scope>NUCLEOTIDE SEQUENCE [LARGE SCALE GENOMIC DNA]</scope>
    <source>
        <strain>ATCC 13939 / DSM 20539 / JCM 16871 / CCUG 27074 / LMG 4051 / NBRC 15346 / NCIMB 9279 / VKM B-1422 / R1</strain>
    </source>
</reference>
<proteinExistence type="evidence at protein level"/>
<feature type="chain" id="PRO_0000326700" description="Acylphosphatase">
    <location>
        <begin position="1"/>
        <end position="87"/>
    </location>
</feature>
<feature type="domain" description="Acylphosphatase-like" evidence="1">
    <location>
        <begin position="2"/>
        <end position="87"/>
    </location>
</feature>
<feature type="active site" evidence="1">
    <location>
        <position position="17"/>
    </location>
</feature>
<feature type="active site" evidence="1">
    <location>
        <position position="35"/>
    </location>
</feature>
<feature type="strand" evidence="3">
    <location>
        <begin position="2"/>
        <end position="10"/>
    </location>
</feature>
<feature type="turn" evidence="3">
    <location>
        <begin position="12"/>
        <end position="15"/>
    </location>
</feature>
<feature type="helix" evidence="3">
    <location>
        <begin position="16"/>
        <end position="26"/>
    </location>
</feature>
<feature type="strand" evidence="3">
    <location>
        <begin position="30"/>
        <end position="35"/>
    </location>
</feature>
<feature type="strand" evidence="3">
    <location>
        <begin position="41"/>
        <end position="47"/>
    </location>
</feature>
<feature type="helix" evidence="3">
    <location>
        <begin position="49"/>
        <end position="59"/>
    </location>
</feature>
<feature type="strand" evidence="3">
    <location>
        <begin position="67"/>
        <end position="76"/>
    </location>
</feature>
<feature type="strand" evidence="3">
    <location>
        <begin position="83"/>
        <end position="87"/>
    </location>
</feature>
<evidence type="ECO:0000255" key="1">
    <source>
        <dbReference type="PROSITE-ProRule" id="PRU00520"/>
    </source>
</evidence>
<evidence type="ECO:0000305" key="2"/>
<evidence type="ECO:0007829" key="3">
    <source>
        <dbReference type="PDB" id="8JFS"/>
    </source>
</evidence>
<protein>
    <recommendedName>
        <fullName>Acylphosphatase</fullName>
        <ecNumber>3.6.1.7</ecNumber>
    </recommendedName>
    <alternativeName>
        <fullName>Acylphosphate phosphohydrolase</fullName>
    </alternativeName>
</protein>
<sequence>MRLTALVSGHVQGVGYRLFVQRYARDLGLHGYAENLSDGKVEVIAEGDEDALNRLLHWLRRGPPHARVQAVDTQYSEETGLREFHIY</sequence>